<evidence type="ECO:0000255" key="1">
    <source>
        <dbReference type="HAMAP-Rule" id="MF_00328"/>
    </source>
</evidence>
<comment type="function">
    <text evidence="1">Essential for recycling GMP and indirectly, cGMP.</text>
</comment>
<comment type="catalytic activity">
    <reaction evidence="1">
        <text>GMP + ATP = GDP + ADP</text>
        <dbReference type="Rhea" id="RHEA:20780"/>
        <dbReference type="ChEBI" id="CHEBI:30616"/>
        <dbReference type="ChEBI" id="CHEBI:58115"/>
        <dbReference type="ChEBI" id="CHEBI:58189"/>
        <dbReference type="ChEBI" id="CHEBI:456216"/>
        <dbReference type="EC" id="2.7.4.8"/>
    </reaction>
</comment>
<comment type="subcellular location">
    <subcellularLocation>
        <location evidence="1">Cytoplasm</location>
    </subcellularLocation>
</comment>
<comment type="similarity">
    <text evidence="1">Belongs to the guanylate kinase family.</text>
</comment>
<organism>
    <name type="scientific">Nitrosospira multiformis (strain ATCC 25196 / NCIMB 11849 / C 71)</name>
    <dbReference type="NCBI Taxonomy" id="323848"/>
    <lineage>
        <taxon>Bacteria</taxon>
        <taxon>Pseudomonadati</taxon>
        <taxon>Pseudomonadota</taxon>
        <taxon>Betaproteobacteria</taxon>
        <taxon>Nitrosomonadales</taxon>
        <taxon>Nitrosomonadaceae</taxon>
        <taxon>Nitrosospira</taxon>
    </lineage>
</organism>
<feature type="chain" id="PRO_0000266361" description="Guanylate kinase">
    <location>
        <begin position="1"/>
        <end position="210"/>
    </location>
</feature>
<feature type="domain" description="Guanylate kinase-like" evidence="1">
    <location>
        <begin position="6"/>
        <end position="184"/>
    </location>
</feature>
<feature type="binding site" evidence="1">
    <location>
        <begin position="13"/>
        <end position="20"/>
    </location>
    <ligand>
        <name>ATP</name>
        <dbReference type="ChEBI" id="CHEBI:30616"/>
    </ligand>
</feature>
<accession>Q2YD10</accession>
<gene>
    <name evidence="1" type="primary">gmk</name>
    <name type="ordered locus">Nmul_A0052</name>
</gene>
<reference key="1">
    <citation type="submission" date="2005-08" db="EMBL/GenBank/DDBJ databases">
        <title>Complete sequence of chromosome 1 of Nitrosospira multiformis ATCC 25196.</title>
        <authorList>
            <person name="Copeland A."/>
            <person name="Lucas S."/>
            <person name="Lapidus A."/>
            <person name="Barry K."/>
            <person name="Detter J.C."/>
            <person name="Glavina T."/>
            <person name="Hammon N."/>
            <person name="Israni S."/>
            <person name="Pitluck S."/>
            <person name="Chain P."/>
            <person name="Malfatti S."/>
            <person name="Shin M."/>
            <person name="Vergez L."/>
            <person name="Schmutz J."/>
            <person name="Larimer F."/>
            <person name="Land M."/>
            <person name="Hauser L."/>
            <person name="Kyrpides N."/>
            <person name="Lykidis A."/>
            <person name="Richardson P."/>
        </authorList>
    </citation>
    <scope>NUCLEOTIDE SEQUENCE [LARGE SCALE GENOMIC DNA]</scope>
    <source>
        <strain>ATCC 25196 / NCIMB 11849 / C 71</strain>
    </source>
</reference>
<name>KGUA_NITMU</name>
<dbReference type="EC" id="2.7.4.8" evidence="1"/>
<dbReference type="EMBL" id="CP000103">
    <property type="protein sequence ID" value="ABB73361.1"/>
    <property type="molecule type" value="Genomic_DNA"/>
</dbReference>
<dbReference type="RefSeq" id="WP_011379416.1">
    <property type="nucleotide sequence ID" value="NC_007614.1"/>
</dbReference>
<dbReference type="SMR" id="Q2YD10"/>
<dbReference type="STRING" id="323848.Nmul_A0052"/>
<dbReference type="KEGG" id="nmu:Nmul_A0052"/>
<dbReference type="eggNOG" id="COG0194">
    <property type="taxonomic scope" value="Bacteria"/>
</dbReference>
<dbReference type="HOGENOM" id="CLU_001715_1_2_4"/>
<dbReference type="OrthoDB" id="9808150at2"/>
<dbReference type="Proteomes" id="UP000002718">
    <property type="component" value="Chromosome"/>
</dbReference>
<dbReference type="GO" id="GO:0005829">
    <property type="term" value="C:cytosol"/>
    <property type="evidence" value="ECO:0007669"/>
    <property type="project" value="TreeGrafter"/>
</dbReference>
<dbReference type="GO" id="GO:0005524">
    <property type="term" value="F:ATP binding"/>
    <property type="evidence" value="ECO:0007669"/>
    <property type="project" value="UniProtKB-UniRule"/>
</dbReference>
<dbReference type="GO" id="GO:0004385">
    <property type="term" value="F:guanylate kinase activity"/>
    <property type="evidence" value="ECO:0007669"/>
    <property type="project" value="UniProtKB-UniRule"/>
</dbReference>
<dbReference type="CDD" id="cd00071">
    <property type="entry name" value="GMPK"/>
    <property type="match status" value="1"/>
</dbReference>
<dbReference type="FunFam" id="3.30.63.10:FF:000002">
    <property type="entry name" value="Guanylate kinase 1"/>
    <property type="match status" value="1"/>
</dbReference>
<dbReference type="Gene3D" id="3.30.63.10">
    <property type="entry name" value="Guanylate Kinase phosphate binding domain"/>
    <property type="match status" value="1"/>
</dbReference>
<dbReference type="Gene3D" id="3.40.50.300">
    <property type="entry name" value="P-loop containing nucleotide triphosphate hydrolases"/>
    <property type="match status" value="1"/>
</dbReference>
<dbReference type="HAMAP" id="MF_00328">
    <property type="entry name" value="Guanylate_kinase"/>
    <property type="match status" value="1"/>
</dbReference>
<dbReference type="InterPro" id="IPR008145">
    <property type="entry name" value="GK/Ca_channel_bsu"/>
</dbReference>
<dbReference type="InterPro" id="IPR008144">
    <property type="entry name" value="Guanylate_kin-like_dom"/>
</dbReference>
<dbReference type="InterPro" id="IPR017665">
    <property type="entry name" value="Guanylate_kinase"/>
</dbReference>
<dbReference type="InterPro" id="IPR020590">
    <property type="entry name" value="Guanylate_kinase_CS"/>
</dbReference>
<dbReference type="InterPro" id="IPR027417">
    <property type="entry name" value="P-loop_NTPase"/>
</dbReference>
<dbReference type="NCBIfam" id="TIGR03263">
    <property type="entry name" value="guanyl_kin"/>
    <property type="match status" value="1"/>
</dbReference>
<dbReference type="PANTHER" id="PTHR23117:SF13">
    <property type="entry name" value="GUANYLATE KINASE"/>
    <property type="match status" value="1"/>
</dbReference>
<dbReference type="PANTHER" id="PTHR23117">
    <property type="entry name" value="GUANYLATE KINASE-RELATED"/>
    <property type="match status" value="1"/>
</dbReference>
<dbReference type="Pfam" id="PF00625">
    <property type="entry name" value="Guanylate_kin"/>
    <property type="match status" value="1"/>
</dbReference>
<dbReference type="SMART" id="SM00072">
    <property type="entry name" value="GuKc"/>
    <property type="match status" value="1"/>
</dbReference>
<dbReference type="SUPFAM" id="SSF52540">
    <property type="entry name" value="P-loop containing nucleoside triphosphate hydrolases"/>
    <property type="match status" value="1"/>
</dbReference>
<dbReference type="PROSITE" id="PS00856">
    <property type="entry name" value="GUANYLATE_KINASE_1"/>
    <property type="match status" value="1"/>
</dbReference>
<dbReference type="PROSITE" id="PS50052">
    <property type="entry name" value="GUANYLATE_KINASE_2"/>
    <property type="match status" value="1"/>
</dbReference>
<protein>
    <recommendedName>
        <fullName evidence="1">Guanylate kinase</fullName>
        <ecNumber evidence="1">2.7.4.8</ecNumber>
    </recommendedName>
    <alternativeName>
        <fullName evidence="1">GMP kinase</fullName>
    </alternativeName>
</protein>
<sequence length="210" mass="23665">MTTTPGTLYIISAPSGAGKTSLVKALLQTGIDLSLSISYTSRQPRPEEMDGRDYHFVTRQVFEQKLQEDEFLESAELYGNFYGTSKKWINETMTSGRDILLEIDSQGARQVRAVFPVAVGIFVLPPSLEVLEMRLRQRAQDSLEAISRRLAAAREELSHAGEYNYIIINDKLDRALQDLKCIIQAERLKTAKQLVRHHGLLAQLTRTSVL</sequence>
<keyword id="KW-0067">ATP-binding</keyword>
<keyword id="KW-0963">Cytoplasm</keyword>
<keyword id="KW-0418">Kinase</keyword>
<keyword id="KW-0547">Nucleotide-binding</keyword>
<keyword id="KW-1185">Reference proteome</keyword>
<keyword id="KW-0808">Transferase</keyword>
<proteinExistence type="inferred from homology"/>